<reference key="1">
    <citation type="journal article" date="2005" name="Proc. Natl. Acad. Sci. U.S.A.">
        <title>Comparison of the complete genome sequences of Pseudomonas syringae pv. syringae B728a and pv. tomato DC3000.</title>
        <authorList>
            <person name="Feil H."/>
            <person name="Feil W.S."/>
            <person name="Chain P."/>
            <person name="Larimer F."/>
            <person name="Dibartolo G."/>
            <person name="Copeland A."/>
            <person name="Lykidis A."/>
            <person name="Trong S."/>
            <person name="Nolan M."/>
            <person name="Goltsman E."/>
            <person name="Thiel J."/>
            <person name="Malfatti S."/>
            <person name="Loper J.E."/>
            <person name="Lapidus A."/>
            <person name="Detter J.C."/>
            <person name="Land M."/>
            <person name="Richardson P.M."/>
            <person name="Kyrpides N.C."/>
            <person name="Ivanova N."/>
            <person name="Lindow S.E."/>
        </authorList>
    </citation>
    <scope>NUCLEOTIDE SEQUENCE [LARGE SCALE GENOMIC DNA]</scope>
    <source>
        <strain>B728a</strain>
    </source>
</reference>
<proteinExistence type="inferred from homology"/>
<sequence>MKIKAPVITIDGPSGSGKGTVAGLLARKLGWCLLDSGALYRLLAFAARNHGVDLTNEEALKLLAAHLDVQFEATAAGQGQRIILEGEDVTHAIRNEQVGSGASQVASLPAVRDALLLRQRAFQEEPGLVADGRDMGTVVFPDAPLKIFLTASAEERARRRYLQLKAKGDDVSLSSLLDEICARDERDTQRAVAPLKPAHDAIQLDSTELSIEQVLERILSEIALRGIAG</sequence>
<comment type="catalytic activity">
    <reaction evidence="1">
        <text>CMP + ATP = CDP + ADP</text>
        <dbReference type="Rhea" id="RHEA:11600"/>
        <dbReference type="ChEBI" id="CHEBI:30616"/>
        <dbReference type="ChEBI" id="CHEBI:58069"/>
        <dbReference type="ChEBI" id="CHEBI:60377"/>
        <dbReference type="ChEBI" id="CHEBI:456216"/>
        <dbReference type="EC" id="2.7.4.25"/>
    </reaction>
</comment>
<comment type="catalytic activity">
    <reaction evidence="1">
        <text>dCMP + ATP = dCDP + ADP</text>
        <dbReference type="Rhea" id="RHEA:25094"/>
        <dbReference type="ChEBI" id="CHEBI:30616"/>
        <dbReference type="ChEBI" id="CHEBI:57566"/>
        <dbReference type="ChEBI" id="CHEBI:58593"/>
        <dbReference type="ChEBI" id="CHEBI:456216"/>
        <dbReference type="EC" id="2.7.4.25"/>
    </reaction>
</comment>
<comment type="subcellular location">
    <subcellularLocation>
        <location evidence="1">Cytoplasm</location>
    </subcellularLocation>
</comment>
<comment type="similarity">
    <text evidence="1">Belongs to the cytidylate kinase family. Type 1 subfamily.</text>
</comment>
<evidence type="ECO:0000255" key="1">
    <source>
        <dbReference type="HAMAP-Rule" id="MF_00238"/>
    </source>
</evidence>
<keyword id="KW-0067">ATP-binding</keyword>
<keyword id="KW-0963">Cytoplasm</keyword>
<keyword id="KW-0418">Kinase</keyword>
<keyword id="KW-0547">Nucleotide-binding</keyword>
<keyword id="KW-0808">Transferase</keyword>
<protein>
    <recommendedName>
        <fullName evidence="1">Cytidylate kinase</fullName>
        <shortName evidence="1">CK</shortName>
        <ecNumber evidence="1">2.7.4.25</ecNumber>
    </recommendedName>
    <alternativeName>
        <fullName evidence="1">Cytidine monophosphate kinase</fullName>
        <shortName evidence="1">CMP kinase</shortName>
    </alternativeName>
</protein>
<organism>
    <name type="scientific">Pseudomonas syringae pv. syringae (strain B728a)</name>
    <dbReference type="NCBI Taxonomy" id="205918"/>
    <lineage>
        <taxon>Bacteria</taxon>
        <taxon>Pseudomonadati</taxon>
        <taxon>Pseudomonadota</taxon>
        <taxon>Gammaproteobacteria</taxon>
        <taxon>Pseudomonadales</taxon>
        <taxon>Pseudomonadaceae</taxon>
        <taxon>Pseudomonas</taxon>
        <taxon>Pseudomonas syringae</taxon>
    </lineage>
</organism>
<gene>
    <name evidence="1" type="primary">cmk</name>
    <name type="ordered locus">Psyr_3643</name>
</gene>
<accession>Q4ZQ97</accession>
<dbReference type="EC" id="2.7.4.25" evidence="1"/>
<dbReference type="EMBL" id="CP000075">
    <property type="protein sequence ID" value="AAY38675.1"/>
    <property type="molecule type" value="Genomic_DNA"/>
</dbReference>
<dbReference type="RefSeq" id="WP_002554563.1">
    <property type="nucleotide sequence ID" value="NC_007005.1"/>
</dbReference>
<dbReference type="RefSeq" id="YP_236713.1">
    <property type="nucleotide sequence ID" value="NC_007005.1"/>
</dbReference>
<dbReference type="SMR" id="Q4ZQ97"/>
<dbReference type="STRING" id="205918.Psyr_3643"/>
<dbReference type="GeneID" id="69860684"/>
<dbReference type="KEGG" id="psb:Psyr_3643"/>
<dbReference type="PATRIC" id="fig|205918.7.peg.3740"/>
<dbReference type="eggNOG" id="COG0283">
    <property type="taxonomic scope" value="Bacteria"/>
</dbReference>
<dbReference type="HOGENOM" id="CLU_079959_0_2_6"/>
<dbReference type="OrthoDB" id="9807434at2"/>
<dbReference type="Proteomes" id="UP000000426">
    <property type="component" value="Chromosome"/>
</dbReference>
<dbReference type="GO" id="GO:0005829">
    <property type="term" value="C:cytosol"/>
    <property type="evidence" value="ECO:0007669"/>
    <property type="project" value="TreeGrafter"/>
</dbReference>
<dbReference type="GO" id="GO:0005524">
    <property type="term" value="F:ATP binding"/>
    <property type="evidence" value="ECO:0007669"/>
    <property type="project" value="UniProtKB-UniRule"/>
</dbReference>
<dbReference type="GO" id="GO:0036430">
    <property type="term" value="F:CMP kinase activity"/>
    <property type="evidence" value="ECO:0007669"/>
    <property type="project" value="RHEA"/>
</dbReference>
<dbReference type="GO" id="GO:0036431">
    <property type="term" value="F:dCMP kinase activity"/>
    <property type="evidence" value="ECO:0007669"/>
    <property type="project" value="RHEA"/>
</dbReference>
<dbReference type="GO" id="GO:0015949">
    <property type="term" value="P:nucleobase-containing small molecule interconversion"/>
    <property type="evidence" value="ECO:0007669"/>
    <property type="project" value="TreeGrafter"/>
</dbReference>
<dbReference type="GO" id="GO:0006220">
    <property type="term" value="P:pyrimidine nucleotide metabolic process"/>
    <property type="evidence" value="ECO:0007669"/>
    <property type="project" value="UniProtKB-UniRule"/>
</dbReference>
<dbReference type="CDD" id="cd02020">
    <property type="entry name" value="CMPK"/>
    <property type="match status" value="1"/>
</dbReference>
<dbReference type="FunFam" id="3.40.50.300:FF:000262">
    <property type="entry name" value="Cytidylate kinase"/>
    <property type="match status" value="1"/>
</dbReference>
<dbReference type="Gene3D" id="3.40.50.300">
    <property type="entry name" value="P-loop containing nucleotide triphosphate hydrolases"/>
    <property type="match status" value="1"/>
</dbReference>
<dbReference type="HAMAP" id="MF_00238">
    <property type="entry name" value="Cytidyl_kinase_type1"/>
    <property type="match status" value="1"/>
</dbReference>
<dbReference type="InterPro" id="IPR003136">
    <property type="entry name" value="Cytidylate_kin"/>
</dbReference>
<dbReference type="InterPro" id="IPR011994">
    <property type="entry name" value="Cytidylate_kinase_dom"/>
</dbReference>
<dbReference type="InterPro" id="IPR027417">
    <property type="entry name" value="P-loop_NTPase"/>
</dbReference>
<dbReference type="NCBIfam" id="TIGR00017">
    <property type="entry name" value="cmk"/>
    <property type="match status" value="1"/>
</dbReference>
<dbReference type="PANTHER" id="PTHR21299:SF2">
    <property type="entry name" value="CYTIDYLATE KINASE"/>
    <property type="match status" value="1"/>
</dbReference>
<dbReference type="PANTHER" id="PTHR21299">
    <property type="entry name" value="CYTIDYLATE KINASE/PANTOATE-BETA-ALANINE LIGASE"/>
    <property type="match status" value="1"/>
</dbReference>
<dbReference type="Pfam" id="PF02224">
    <property type="entry name" value="Cytidylate_kin"/>
    <property type="match status" value="1"/>
</dbReference>
<dbReference type="SUPFAM" id="SSF52540">
    <property type="entry name" value="P-loop containing nucleoside triphosphate hydrolases"/>
    <property type="match status" value="1"/>
</dbReference>
<name>KCY_PSEU2</name>
<feature type="chain" id="PRO_1000048254" description="Cytidylate kinase">
    <location>
        <begin position="1"/>
        <end position="229"/>
    </location>
</feature>
<feature type="binding site" evidence="1">
    <location>
        <begin position="12"/>
        <end position="20"/>
    </location>
    <ligand>
        <name>ATP</name>
        <dbReference type="ChEBI" id="CHEBI:30616"/>
    </ligand>
</feature>